<name>DNAK_MYCGA</name>
<protein>
    <recommendedName>
        <fullName evidence="1">Chaperone protein DnaK</fullName>
    </recommendedName>
    <alternativeName>
        <fullName evidence="1">HSP70</fullName>
    </alternativeName>
    <alternativeName>
        <fullName evidence="1">Heat shock 70 kDa protein</fullName>
    </alternativeName>
    <alternativeName>
        <fullName evidence="1">Heat shock protein 70</fullName>
    </alternativeName>
</protein>
<gene>
    <name evidence="1" type="primary">dnaK</name>
    <name type="ordered locus">MYCGA5390</name>
    <name type="ORF">MGA_0279</name>
</gene>
<reference key="1">
    <citation type="journal article" date="2003" name="Microbiology">
        <title>The complete genome sequence of the avian pathogen Mycoplasma gallisepticum strain R(low).</title>
        <authorList>
            <person name="Papazisi L."/>
            <person name="Gorton T.S."/>
            <person name="Kutish G."/>
            <person name="Markham P.F."/>
            <person name="Browning G.F."/>
            <person name="Nguyen D.K."/>
            <person name="Swartzell S."/>
            <person name="Madan A."/>
            <person name="Mahairas G."/>
            <person name="Geary S.J."/>
        </authorList>
    </citation>
    <scope>NUCLEOTIDE SEQUENCE [LARGE SCALE GENOMIC DNA]</scope>
    <source>
        <strain>R(low / passage 15 / clone 2)</strain>
    </source>
</reference>
<keyword id="KW-0067">ATP-binding</keyword>
<keyword id="KW-0143">Chaperone</keyword>
<keyword id="KW-0547">Nucleotide-binding</keyword>
<keyword id="KW-0597">Phosphoprotein</keyword>
<keyword id="KW-1185">Reference proteome</keyword>
<keyword id="KW-0346">Stress response</keyword>
<dbReference type="EMBL" id="AE015450">
    <property type="protein sequence ID" value="AAP56889.2"/>
    <property type="molecule type" value="Genomic_DNA"/>
</dbReference>
<dbReference type="RefSeq" id="WP_011113796.1">
    <property type="nucleotide sequence ID" value="NC_004829.2"/>
</dbReference>
<dbReference type="SMR" id="Q7NAU6"/>
<dbReference type="KEGG" id="mga:MGA_0279"/>
<dbReference type="PATRIC" id="fig|233150.7.peg.611"/>
<dbReference type="HOGENOM" id="CLU_005965_2_1_14"/>
<dbReference type="OrthoDB" id="9766019at2"/>
<dbReference type="Proteomes" id="UP000001418">
    <property type="component" value="Chromosome"/>
</dbReference>
<dbReference type="GO" id="GO:0005524">
    <property type="term" value="F:ATP binding"/>
    <property type="evidence" value="ECO:0007669"/>
    <property type="project" value="UniProtKB-UniRule"/>
</dbReference>
<dbReference type="GO" id="GO:0140662">
    <property type="term" value="F:ATP-dependent protein folding chaperone"/>
    <property type="evidence" value="ECO:0007669"/>
    <property type="project" value="InterPro"/>
</dbReference>
<dbReference type="GO" id="GO:0051082">
    <property type="term" value="F:unfolded protein binding"/>
    <property type="evidence" value="ECO:0007669"/>
    <property type="project" value="InterPro"/>
</dbReference>
<dbReference type="CDD" id="cd10234">
    <property type="entry name" value="ASKHA_NBD_HSP70_DnaK-like"/>
    <property type="match status" value="1"/>
</dbReference>
<dbReference type="FunFam" id="2.60.34.10:FF:000014">
    <property type="entry name" value="Chaperone protein DnaK HSP70"/>
    <property type="match status" value="1"/>
</dbReference>
<dbReference type="FunFam" id="3.30.420.40:FF:000071">
    <property type="entry name" value="Molecular chaperone DnaK"/>
    <property type="match status" value="1"/>
</dbReference>
<dbReference type="FunFam" id="3.90.640.10:FF:000003">
    <property type="entry name" value="Molecular chaperone DnaK"/>
    <property type="match status" value="1"/>
</dbReference>
<dbReference type="Gene3D" id="3.30.420.40">
    <property type="match status" value="2"/>
</dbReference>
<dbReference type="Gene3D" id="3.90.640.10">
    <property type="entry name" value="Actin, Chain A, domain 4"/>
    <property type="match status" value="1"/>
</dbReference>
<dbReference type="Gene3D" id="2.60.34.10">
    <property type="entry name" value="Substrate Binding Domain Of DNAk, Chain A, domain 1"/>
    <property type="match status" value="1"/>
</dbReference>
<dbReference type="HAMAP" id="MF_00332">
    <property type="entry name" value="DnaK"/>
    <property type="match status" value="1"/>
</dbReference>
<dbReference type="InterPro" id="IPR043129">
    <property type="entry name" value="ATPase_NBD"/>
</dbReference>
<dbReference type="InterPro" id="IPR012725">
    <property type="entry name" value="Chaperone_DnaK"/>
</dbReference>
<dbReference type="InterPro" id="IPR018181">
    <property type="entry name" value="Heat_shock_70_CS"/>
</dbReference>
<dbReference type="InterPro" id="IPR029047">
    <property type="entry name" value="HSP70_peptide-bd_sf"/>
</dbReference>
<dbReference type="InterPro" id="IPR013126">
    <property type="entry name" value="Hsp_70_fam"/>
</dbReference>
<dbReference type="NCBIfam" id="NF001413">
    <property type="entry name" value="PRK00290.1"/>
    <property type="match status" value="1"/>
</dbReference>
<dbReference type="NCBIfam" id="TIGR02350">
    <property type="entry name" value="prok_dnaK"/>
    <property type="match status" value="1"/>
</dbReference>
<dbReference type="PANTHER" id="PTHR19375">
    <property type="entry name" value="HEAT SHOCK PROTEIN 70KDA"/>
    <property type="match status" value="1"/>
</dbReference>
<dbReference type="Pfam" id="PF00012">
    <property type="entry name" value="HSP70"/>
    <property type="match status" value="1"/>
</dbReference>
<dbReference type="PRINTS" id="PR00301">
    <property type="entry name" value="HEATSHOCK70"/>
</dbReference>
<dbReference type="SUPFAM" id="SSF53067">
    <property type="entry name" value="Actin-like ATPase domain"/>
    <property type="match status" value="2"/>
</dbReference>
<dbReference type="SUPFAM" id="SSF100920">
    <property type="entry name" value="Heat shock protein 70kD (HSP70), peptide-binding domain"/>
    <property type="match status" value="1"/>
</dbReference>
<dbReference type="PROSITE" id="PS00297">
    <property type="entry name" value="HSP70_1"/>
    <property type="match status" value="1"/>
</dbReference>
<dbReference type="PROSITE" id="PS00329">
    <property type="entry name" value="HSP70_2"/>
    <property type="match status" value="1"/>
</dbReference>
<dbReference type="PROSITE" id="PS01036">
    <property type="entry name" value="HSP70_3"/>
    <property type="match status" value="1"/>
</dbReference>
<sequence length="593" mass="64455">MSNNNGLIIGIDLGTTNSCVSVMEGAQKVVIENPEGKRTTPSVVSYKNGEIIVGDAAKRQMLTNPNTIVSIKRLMGTSKKVKINDKGVEKELTPEEVSASILSYLKDYAEKKTGQKISRAVITVPAYFNDAERQATKTAGKIAGLTVERIINEPTAAALAYGIDKGHREMKVLVYDLGGGTFDVSLLDIADGTFEVMATAGDNRLGGDDWDNKIIEWIIAEIKKDHPSLDLKSDKMAMQRLKEAAERAKIELSAQLETLISLPFIAVTPEGPVNAELTLSRAKFEELTKDLLERTRNPIADVLKEAKVDPSQVDEILLVGGSTRMPAVQKLVESMIPNKAPNRTINPDEVVAIGAAVQGGVLRGDVKDILLLDVTPLTLAIETLGGVATPIIKRNTTIPVSKSQIFSTAQDNQESVDVSIYQGERPMARENKSLGTFSLGGIQPAPKGKPQIEITFNIDANGILNVKAKDLTTGKENSITISNSSELDENEIQRMIRDAEANKERDAIVKQRIEMRYEGEGIVNTINEILGSKEAEALPAQEKASLTKIVDGINGALKAEKWDELKEQIDGFKKWRDDMSKKYGGGEAPAEPK</sequence>
<organism>
    <name type="scientific">Mycoplasmoides gallisepticum (strain R(low / passage 15 / clone 2))</name>
    <name type="common">Mycoplasma gallisepticum</name>
    <dbReference type="NCBI Taxonomy" id="710127"/>
    <lineage>
        <taxon>Bacteria</taxon>
        <taxon>Bacillati</taxon>
        <taxon>Mycoplasmatota</taxon>
        <taxon>Mycoplasmoidales</taxon>
        <taxon>Mycoplasmoidaceae</taxon>
        <taxon>Mycoplasmoides</taxon>
    </lineage>
</organism>
<feature type="chain" id="PRO_0000078489" description="Chaperone protein DnaK">
    <location>
        <begin position="1"/>
        <end position="593"/>
    </location>
</feature>
<feature type="modified residue" description="Phosphothreonine; by autocatalysis" evidence="1">
    <location>
        <position position="181"/>
    </location>
</feature>
<comment type="function">
    <text evidence="1">Acts as a chaperone.</text>
</comment>
<comment type="induction">
    <text evidence="1">By stress conditions e.g. heat shock.</text>
</comment>
<comment type="similarity">
    <text evidence="1">Belongs to the heat shock protein 70 family.</text>
</comment>
<proteinExistence type="inferred from homology"/>
<accession>Q7NAU6</accession>
<evidence type="ECO:0000255" key="1">
    <source>
        <dbReference type="HAMAP-Rule" id="MF_00332"/>
    </source>
</evidence>